<gene>
    <name evidence="1" type="primary">atpB</name>
    <name evidence="1" type="synonym">atpI</name>
    <name type="ordered locus">P9301_16461</name>
</gene>
<feature type="chain" id="PRO_0000362378" description="ATP synthase subunit a">
    <location>
        <begin position="1"/>
        <end position="241"/>
    </location>
</feature>
<feature type="transmembrane region" description="Helical" evidence="1">
    <location>
        <begin position="30"/>
        <end position="50"/>
    </location>
</feature>
<feature type="transmembrane region" description="Helical" evidence="1">
    <location>
        <begin position="91"/>
        <end position="111"/>
    </location>
</feature>
<feature type="transmembrane region" description="Helical" evidence="1">
    <location>
        <begin position="128"/>
        <end position="148"/>
    </location>
</feature>
<feature type="transmembrane region" description="Helical" evidence="1">
    <location>
        <begin position="193"/>
        <end position="213"/>
    </location>
</feature>
<feature type="transmembrane region" description="Helical" evidence="1">
    <location>
        <begin position="214"/>
        <end position="234"/>
    </location>
</feature>
<sequence length="241" mass="27340">MFFNSLLTNFAALEVGQHLYWQIGNIRLHGQVFLTSWILLGALLVFISLGTKKMENDPKGLQNLLEFLWDYIRDLARTQIGEKVYRDWMPFIGTLFLFVFVSNWGGALIPWRLIKLPSGELGAPTADINTTIALALLVSLSYFYAGLSNKGWRYFEYYVHPTPIMLPFKILEDFTKPLSLSFRLFGNILADELVVGVLVFLVPLILPIPVMFLGLFTSAIQALIFATLAAYYIGEAVEEHH</sequence>
<proteinExistence type="inferred from homology"/>
<comment type="function">
    <text evidence="1">Key component of the proton channel; it plays a direct role in the translocation of protons across the membrane.</text>
</comment>
<comment type="subunit">
    <text evidence="1">F-type ATPases have 2 components, CF(1) - the catalytic core - and CF(0) - the membrane proton channel. CF(1) has five subunits: alpha(3), beta(3), gamma(1), delta(1), epsilon(1). CF(0) has four main subunits: a, b, b' and c.</text>
</comment>
<comment type="subcellular location">
    <subcellularLocation>
        <location evidence="1">Cellular thylakoid membrane</location>
        <topology evidence="1">Multi-pass membrane protein</topology>
    </subcellularLocation>
</comment>
<comment type="similarity">
    <text evidence="1">Belongs to the ATPase A chain family.</text>
</comment>
<accession>A3PEU4</accession>
<name>ATP6_PROM0</name>
<dbReference type="EMBL" id="CP000576">
    <property type="protein sequence ID" value="ABO18269.1"/>
    <property type="molecule type" value="Genomic_DNA"/>
</dbReference>
<dbReference type="RefSeq" id="WP_011863567.1">
    <property type="nucleotide sequence ID" value="NC_009091.1"/>
</dbReference>
<dbReference type="SMR" id="A3PEU4"/>
<dbReference type="STRING" id="167546.P9301_16461"/>
<dbReference type="KEGG" id="pmg:P9301_16461"/>
<dbReference type="eggNOG" id="COG0356">
    <property type="taxonomic scope" value="Bacteria"/>
</dbReference>
<dbReference type="HOGENOM" id="CLU_041018_2_4_3"/>
<dbReference type="OrthoDB" id="9789241at2"/>
<dbReference type="Proteomes" id="UP000001430">
    <property type="component" value="Chromosome"/>
</dbReference>
<dbReference type="GO" id="GO:0031676">
    <property type="term" value="C:plasma membrane-derived thylakoid membrane"/>
    <property type="evidence" value="ECO:0007669"/>
    <property type="project" value="UniProtKB-SubCell"/>
</dbReference>
<dbReference type="GO" id="GO:0045259">
    <property type="term" value="C:proton-transporting ATP synthase complex"/>
    <property type="evidence" value="ECO:0007669"/>
    <property type="project" value="UniProtKB-KW"/>
</dbReference>
<dbReference type="GO" id="GO:0046933">
    <property type="term" value="F:proton-transporting ATP synthase activity, rotational mechanism"/>
    <property type="evidence" value="ECO:0007669"/>
    <property type="project" value="UniProtKB-UniRule"/>
</dbReference>
<dbReference type="CDD" id="cd00310">
    <property type="entry name" value="ATP-synt_Fo_a_6"/>
    <property type="match status" value="1"/>
</dbReference>
<dbReference type="FunFam" id="1.20.120.220:FF:000001">
    <property type="entry name" value="ATP synthase subunit a, chloroplastic"/>
    <property type="match status" value="1"/>
</dbReference>
<dbReference type="Gene3D" id="1.20.120.220">
    <property type="entry name" value="ATP synthase, F0 complex, subunit A"/>
    <property type="match status" value="1"/>
</dbReference>
<dbReference type="HAMAP" id="MF_01393">
    <property type="entry name" value="ATP_synth_a_bact"/>
    <property type="match status" value="1"/>
</dbReference>
<dbReference type="InterPro" id="IPR045082">
    <property type="entry name" value="ATP_syn_F0_a_bact/chloroplast"/>
</dbReference>
<dbReference type="InterPro" id="IPR000568">
    <property type="entry name" value="ATP_synth_F0_asu"/>
</dbReference>
<dbReference type="InterPro" id="IPR023011">
    <property type="entry name" value="ATP_synth_F0_asu_AS"/>
</dbReference>
<dbReference type="InterPro" id="IPR035908">
    <property type="entry name" value="F0_ATP_A_sf"/>
</dbReference>
<dbReference type="NCBIfam" id="TIGR01131">
    <property type="entry name" value="ATP_synt_6_or_A"/>
    <property type="match status" value="1"/>
</dbReference>
<dbReference type="PANTHER" id="PTHR42823">
    <property type="entry name" value="ATP SYNTHASE SUBUNIT A, CHLOROPLASTIC"/>
    <property type="match status" value="1"/>
</dbReference>
<dbReference type="PANTHER" id="PTHR42823:SF3">
    <property type="entry name" value="ATP SYNTHASE SUBUNIT A, CHLOROPLASTIC"/>
    <property type="match status" value="1"/>
</dbReference>
<dbReference type="Pfam" id="PF00119">
    <property type="entry name" value="ATP-synt_A"/>
    <property type="match status" value="1"/>
</dbReference>
<dbReference type="PRINTS" id="PR00123">
    <property type="entry name" value="ATPASEA"/>
</dbReference>
<dbReference type="SUPFAM" id="SSF81336">
    <property type="entry name" value="F1F0 ATP synthase subunit A"/>
    <property type="match status" value="1"/>
</dbReference>
<dbReference type="PROSITE" id="PS00449">
    <property type="entry name" value="ATPASE_A"/>
    <property type="match status" value="1"/>
</dbReference>
<organism>
    <name type="scientific">Prochlorococcus marinus (strain MIT 9301)</name>
    <dbReference type="NCBI Taxonomy" id="167546"/>
    <lineage>
        <taxon>Bacteria</taxon>
        <taxon>Bacillati</taxon>
        <taxon>Cyanobacteriota</taxon>
        <taxon>Cyanophyceae</taxon>
        <taxon>Synechococcales</taxon>
        <taxon>Prochlorococcaceae</taxon>
        <taxon>Prochlorococcus</taxon>
    </lineage>
</organism>
<reference key="1">
    <citation type="journal article" date="2007" name="PLoS Genet.">
        <title>Patterns and implications of gene gain and loss in the evolution of Prochlorococcus.</title>
        <authorList>
            <person name="Kettler G.C."/>
            <person name="Martiny A.C."/>
            <person name="Huang K."/>
            <person name="Zucker J."/>
            <person name="Coleman M.L."/>
            <person name="Rodrigue S."/>
            <person name="Chen F."/>
            <person name="Lapidus A."/>
            <person name="Ferriera S."/>
            <person name="Johnson J."/>
            <person name="Steglich C."/>
            <person name="Church G.M."/>
            <person name="Richardson P."/>
            <person name="Chisholm S.W."/>
        </authorList>
    </citation>
    <scope>NUCLEOTIDE SEQUENCE [LARGE SCALE GENOMIC DNA]</scope>
    <source>
        <strain>MIT 9301</strain>
    </source>
</reference>
<protein>
    <recommendedName>
        <fullName evidence="1">ATP synthase subunit a</fullName>
    </recommendedName>
    <alternativeName>
        <fullName evidence="1">ATP synthase F0 sector subunit a</fullName>
    </alternativeName>
    <alternativeName>
        <fullName evidence="1">F-ATPase subunit 6</fullName>
    </alternativeName>
</protein>
<evidence type="ECO:0000255" key="1">
    <source>
        <dbReference type="HAMAP-Rule" id="MF_01393"/>
    </source>
</evidence>
<keyword id="KW-0066">ATP synthesis</keyword>
<keyword id="KW-0138">CF(0)</keyword>
<keyword id="KW-0375">Hydrogen ion transport</keyword>
<keyword id="KW-0406">Ion transport</keyword>
<keyword id="KW-0472">Membrane</keyword>
<keyword id="KW-1185">Reference proteome</keyword>
<keyword id="KW-0793">Thylakoid</keyword>
<keyword id="KW-0812">Transmembrane</keyword>
<keyword id="KW-1133">Transmembrane helix</keyword>
<keyword id="KW-0813">Transport</keyword>